<reference key="1">
    <citation type="journal article" date="2009" name="PLoS ONE">
        <title>Complete genome sequence of Francisella tularensis subspecies holarctica FTNF002-00.</title>
        <authorList>
            <person name="Barabote R.D."/>
            <person name="Xie G."/>
            <person name="Brettin T.S."/>
            <person name="Hinrichs S.H."/>
            <person name="Fey P.D."/>
            <person name="Jay J.J."/>
            <person name="Engle J.L."/>
            <person name="Godbole S.D."/>
            <person name="Noronha J.M."/>
            <person name="Scheuermann R.H."/>
            <person name="Zhou L.W."/>
            <person name="Lion C."/>
            <person name="Dempsey M.P."/>
        </authorList>
    </citation>
    <scope>NUCLEOTIDE SEQUENCE [LARGE SCALE GENOMIC DNA]</scope>
    <source>
        <strain>FTNF002-00 / FTA</strain>
    </source>
</reference>
<keyword id="KW-0030">Aminoacyl-tRNA synthetase</keyword>
<keyword id="KW-0067">ATP-binding</keyword>
<keyword id="KW-0963">Cytoplasm</keyword>
<keyword id="KW-0436">Ligase</keyword>
<keyword id="KW-0460">Magnesium</keyword>
<keyword id="KW-0479">Metal-binding</keyword>
<keyword id="KW-0547">Nucleotide-binding</keyword>
<keyword id="KW-0648">Protein biosynthesis</keyword>
<organism>
    <name type="scientific">Francisella tularensis subsp. holarctica (strain FTNF002-00 / FTA)</name>
    <dbReference type="NCBI Taxonomy" id="458234"/>
    <lineage>
        <taxon>Bacteria</taxon>
        <taxon>Pseudomonadati</taxon>
        <taxon>Pseudomonadota</taxon>
        <taxon>Gammaproteobacteria</taxon>
        <taxon>Thiotrichales</taxon>
        <taxon>Francisellaceae</taxon>
        <taxon>Francisella</taxon>
    </lineage>
</organism>
<evidence type="ECO:0000255" key="1">
    <source>
        <dbReference type="HAMAP-Rule" id="MF_00281"/>
    </source>
</evidence>
<gene>
    <name evidence="1" type="primary">pheS</name>
    <name type="ordered locus">FTA_1265</name>
</gene>
<dbReference type="EC" id="6.1.1.20" evidence="1"/>
<dbReference type="EMBL" id="CP000803">
    <property type="protein sequence ID" value="ABU61740.1"/>
    <property type="molecule type" value="Genomic_DNA"/>
</dbReference>
<dbReference type="RefSeq" id="WP_003016273.1">
    <property type="nucleotide sequence ID" value="NC_009749.1"/>
</dbReference>
<dbReference type="SMR" id="A7NCN7"/>
<dbReference type="KEGG" id="fta:FTA_1265"/>
<dbReference type="HOGENOM" id="CLU_025086_0_1_6"/>
<dbReference type="GO" id="GO:0005737">
    <property type="term" value="C:cytoplasm"/>
    <property type="evidence" value="ECO:0007669"/>
    <property type="project" value="UniProtKB-SubCell"/>
</dbReference>
<dbReference type="GO" id="GO:0005524">
    <property type="term" value="F:ATP binding"/>
    <property type="evidence" value="ECO:0007669"/>
    <property type="project" value="UniProtKB-UniRule"/>
</dbReference>
<dbReference type="GO" id="GO:0000287">
    <property type="term" value="F:magnesium ion binding"/>
    <property type="evidence" value="ECO:0007669"/>
    <property type="project" value="UniProtKB-UniRule"/>
</dbReference>
<dbReference type="GO" id="GO:0004826">
    <property type="term" value="F:phenylalanine-tRNA ligase activity"/>
    <property type="evidence" value="ECO:0007669"/>
    <property type="project" value="UniProtKB-UniRule"/>
</dbReference>
<dbReference type="GO" id="GO:0000049">
    <property type="term" value="F:tRNA binding"/>
    <property type="evidence" value="ECO:0007669"/>
    <property type="project" value="InterPro"/>
</dbReference>
<dbReference type="GO" id="GO:0006432">
    <property type="term" value="P:phenylalanyl-tRNA aminoacylation"/>
    <property type="evidence" value="ECO:0007669"/>
    <property type="project" value="UniProtKB-UniRule"/>
</dbReference>
<dbReference type="CDD" id="cd00496">
    <property type="entry name" value="PheRS_alpha_core"/>
    <property type="match status" value="1"/>
</dbReference>
<dbReference type="FunFam" id="3.30.930.10:FF:000003">
    <property type="entry name" value="Phenylalanine--tRNA ligase alpha subunit"/>
    <property type="match status" value="1"/>
</dbReference>
<dbReference type="Gene3D" id="3.30.930.10">
    <property type="entry name" value="Bira Bifunctional Protein, Domain 2"/>
    <property type="match status" value="1"/>
</dbReference>
<dbReference type="HAMAP" id="MF_00281">
    <property type="entry name" value="Phe_tRNA_synth_alpha1"/>
    <property type="match status" value="1"/>
</dbReference>
<dbReference type="InterPro" id="IPR006195">
    <property type="entry name" value="aa-tRNA-synth_II"/>
</dbReference>
<dbReference type="InterPro" id="IPR045864">
    <property type="entry name" value="aa-tRNA-synth_II/BPL/LPL"/>
</dbReference>
<dbReference type="InterPro" id="IPR004529">
    <property type="entry name" value="Phe-tRNA-synth_IIc_asu"/>
</dbReference>
<dbReference type="InterPro" id="IPR004188">
    <property type="entry name" value="Phe-tRNA_ligase_II_N"/>
</dbReference>
<dbReference type="InterPro" id="IPR022911">
    <property type="entry name" value="Phe_tRNA_ligase_alpha1_bac"/>
</dbReference>
<dbReference type="InterPro" id="IPR002319">
    <property type="entry name" value="Phenylalanyl-tRNA_Synthase"/>
</dbReference>
<dbReference type="InterPro" id="IPR010978">
    <property type="entry name" value="tRNA-bd_arm"/>
</dbReference>
<dbReference type="NCBIfam" id="TIGR00468">
    <property type="entry name" value="pheS"/>
    <property type="match status" value="1"/>
</dbReference>
<dbReference type="PANTHER" id="PTHR11538:SF41">
    <property type="entry name" value="PHENYLALANINE--TRNA LIGASE, MITOCHONDRIAL"/>
    <property type="match status" value="1"/>
</dbReference>
<dbReference type="PANTHER" id="PTHR11538">
    <property type="entry name" value="PHENYLALANYL-TRNA SYNTHETASE"/>
    <property type="match status" value="1"/>
</dbReference>
<dbReference type="Pfam" id="PF02912">
    <property type="entry name" value="Phe_tRNA-synt_N"/>
    <property type="match status" value="1"/>
</dbReference>
<dbReference type="Pfam" id="PF01409">
    <property type="entry name" value="tRNA-synt_2d"/>
    <property type="match status" value="1"/>
</dbReference>
<dbReference type="SUPFAM" id="SSF55681">
    <property type="entry name" value="Class II aaRS and biotin synthetases"/>
    <property type="match status" value="1"/>
</dbReference>
<dbReference type="SUPFAM" id="SSF46589">
    <property type="entry name" value="tRNA-binding arm"/>
    <property type="match status" value="1"/>
</dbReference>
<dbReference type="PROSITE" id="PS50862">
    <property type="entry name" value="AA_TRNA_LIGASE_II"/>
    <property type="match status" value="1"/>
</dbReference>
<protein>
    <recommendedName>
        <fullName evidence="1">Phenylalanine--tRNA ligase alpha subunit</fullName>
        <ecNumber evidence="1">6.1.1.20</ecNumber>
    </recommendedName>
    <alternativeName>
        <fullName evidence="1">Phenylalanyl-tRNA synthetase alpha subunit</fullName>
        <shortName evidence="1">PheRS</shortName>
    </alternativeName>
</protein>
<name>SYFA_FRATF</name>
<proteinExistence type="inferred from homology"/>
<sequence length="337" mass="38505">MQIVEQMKDKALAELNLVKDKKTLDDIRVKYLGKKGELTEMMKLIATLPNDEKPKLGQAVNIAKQALQEAINLKLANFEEQELNEKLAQEKIDITLSGVGQNQGSLHPVTKTLNRIEAFFKQNGFAIEFGPEIESDYYNFETLNIPSHHPARAMHDTFYIDETHVLRTHTSGVQIRTMEKQQPPIRIIAPGRVYRCDSDITHTPMFHQVEGLLVDKDVSFADLKGLLHVFLNSFFEKDLKVRFRPSYFPFTEPSAEADIECVMCDGKGCRVCKHTGWLEVLGCGMVHPKVLKAGNIDSEKYQGFAFGMGVERLSMLRYGIDDLRMFFENDLRFLKQF</sequence>
<accession>A7NCN7</accession>
<comment type="catalytic activity">
    <reaction evidence="1">
        <text>tRNA(Phe) + L-phenylalanine + ATP = L-phenylalanyl-tRNA(Phe) + AMP + diphosphate + H(+)</text>
        <dbReference type="Rhea" id="RHEA:19413"/>
        <dbReference type="Rhea" id="RHEA-COMP:9668"/>
        <dbReference type="Rhea" id="RHEA-COMP:9699"/>
        <dbReference type="ChEBI" id="CHEBI:15378"/>
        <dbReference type="ChEBI" id="CHEBI:30616"/>
        <dbReference type="ChEBI" id="CHEBI:33019"/>
        <dbReference type="ChEBI" id="CHEBI:58095"/>
        <dbReference type="ChEBI" id="CHEBI:78442"/>
        <dbReference type="ChEBI" id="CHEBI:78531"/>
        <dbReference type="ChEBI" id="CHEBI:456215"/>
        <dbReference type="EC" id="6.1.1.20"/>
    </reaction>
</comment>
<comment type="cofactor">
    <cofactor evidence="1">
        <name>Mg(2+)</name>
        <dbReference type="ChEBI" id="CHEBI:18420"/>
    </cofactor>
    <text evidence="1">Binds 2 magnesium ions per tetramer.</text>
</comment>
<comment type="subunit">
    <text evidence="1">Tetramer of two alpha and two beta subunits.</text>
</comment>
<comment type="subcellular location">
    <subcellularLocation>
        <location evidence="1">Cytoplasm</location>
    </subcellularLocation>
</comment>
<comment type="similarity">
    <text evidence="1">Belongs to the class-II aminoacyl-tRNA synthetase family. Phe-tRNA synthetase alpha subunit type 1 subfamily.</text>
</comment>
<feature type="chain" id="PRO_1000006831" description="Phenylalanine--tRNA ligase alpha subunit">
    <location>
        <begin position="1"/>
        <end position="337"/>
    </location>
</feature>
<feature type="binding site" evidence="1">
    <location>
        <position position="252"/>
    </location>
    <ligand>
        <name>Mg(2+)</name>
        <dbReference type="ChEBI" id="CHEBI:18420"/>
        <note>shared with beta subunit</note>
    </ligand>
</feature>